<evidence type="ECO:0000250" key="1"/>
<evidence type="ECO:0000255" key="2"/>
<evidence type="ECO:0000256" key="3">
    <source>
        <dbReference type="SAM" id="MobiDB-lite"/>
    </source>
</evidence>
<evidence type="ECO:0000305" key="4"/>
<evidence type="ECO:0000312" key="5">
    <source>
        <dbReference type="EMBL" id="EEE67443.1"/>
    </source>
</evidence>
<gene>
    <name type="ordered locus">Os07g0570700</name>
    <name type="ordered locus">LOC_Os07g38300</name>
    <name type="ORF">OJ1121_A05.3</name>
    <name type="ORF">OsJ_023845</name>
    <name evidence="5" type="ORF">OsJ_24808</name>
</gene>
<keyword id="KW-0025">Alternative splicing</keyword>
<keyword id="KW-0150">Chloroplast</keyword>
<keyword id="KW-0175">Coiled coil</keyword>
<keyword id="KW-0934">Plastid</keyword>
<keyword id="KW-0648">Protein biosynthesis</keyword>
<keyword id="KW-1185">Reference proteome</keyword>
<keyword id="KW-0809">Transit peptide</keyword>
<protein>
    <recommendedName>
        <fullName>Ribosome-recycling factor, chloroplastic</fullName>
        <shortName>RRF</shortName>
    </recommendedName>
    <alternativeName>
        <fullName>Protein OsL8</fullName>
    </alternativeName>
    <alternativeName>
        <fullName>Ribosome-releasing factor, chloroplastic</fullName>
    </alternativeName>
</protein>
<feature type="transit peptide" description="Chloroplast" evidence="1">
    <location>
        <begin position="1"/>
        <end position="74"/>
    </location>
</feature>
<feature type="chain" id="PRO_0000282652" description="Ribosome-recycling factor, chloroplastic">
    <location>
        <begin position="75"/>
        <end position="266"/>
    </location>
</feature>
<feature type="region of interest" description="Disordered" evidence="3">
    <location>
        <begin position="1"/>
        <end position="30"/>
    </location>
</feature>
<feature type="coiled-coil region" evidence="2">
    <location>
        <begin position="75"/>
        <end position="109"/>
    </location>
</feature>
<feature type="coiled-coil region" evidence="2">
    <location>
        <begin position="207"/>
        <end position="266"/>
    </location>
</feature>
<feature type="compositionally biased region" description="Low complexity" evidence="3">
    <location>
        <begin position="1"/>
        <end position="26"/>
    </location>
</feature>
<feature type="splice variant" id="VSP_024225" description="In isoform 2." evidence="4">
    <original>EKKLSEDNV</original>
    <variation>VHPLRKETF</variation>
    <location>
        <begin position="226"/>
        <end position="234"/>
    </location>
</feature>
<feature type="splice variant" id="VSP_024226" description="In isoform 2." evidence="4">
    <location>
        <begin position="235"/>
        <end position="266"/>
    </location>
</feature>
<feature type="sequence conflict" description="In Ref. 5; AK065242." evidence="4" ref="5">
    <original>V</original>
    <variation>D</variation>
    <location>
        <position position="85"/>
    </location>
</feature>
<feature type="sequence conflict" description="In Ref. 5; AK065242." evidence="4" ref="5">
    <original>K</original>
    <variation>I</variation>
    <location>
        <position position="218"/>
    </location>
</feature>
<name>RRFC_ORYSJ</name>
<dbReference type="EMBL" id="AP005908">
    <property type="protein sequence ID" value="BAC84660.1"/>
    <property type="molecule type" value="Genomic_DNA"/>
</dbReference>
<dbReference type="EMBL" id="AP008213">
    <property type="protein sequence ID" value="BAF21961.1"/>
    <property type="molecule type" value="Genomic_DNA"/>
</dbReference>
<dbReference type="EMBL" id="AP014963">
    <property type="protein sequence ID" value="BAT02230.1"/>
    <property type="molecule type" value="Genomic_DNA"/>
</dbReference>
<dbReference type="EMBL" id="CM000144">
    <property type="protein sequence ID" value="EEE67443.1"/>
    <property type="molecule type" value="Genomic_DNA"/>
</dbReference>
<dbReference type="EMBL" id="AK065242">
    <property type="status" value="NOT_ANNOTATED_CDS"/>
    <property type="molecule type" value="mRNA"/>
</dbReference>
<dbReference type="RefSeq" id="XP_015644851.1">
    <property type="nucleotide sequence ID" value="XM_015789365.1"/>
</dbReference>
<dbReference type="SMR" id="A3BLC3"/>
<dbReference type="FunCoup" id="A3BLC3">
    <property type="interactions" value="1636"/>
</dbReference>
<dbReference type="STRING" id="39947.A3BLC3"/>
<dbReference type="PaxDb" id="39947-A3BLC3"/>
<dbReference type="EnsemblPlants" id="Os07t0570700-01">
    <molecule id="A3BLC3-1"/>
    <property type="protein sequence ID" value="Os07t0570700-01"/>
    <property type="gene ID" value="Os07g0570700"/>
</dbReference>
<dbReference type="Gramene" id="Os07t0570700-01">
    <molecule id="A3BLC3-1"/>
    <property type="protein sequence ID" value="Os07t0570700-01"/>
    <property type="gene ID" value="Os07g0570700"/>
</dbReference>
<dbReference type="KEGG" id="dosa:Os07g0570700"/>
<dbReference type="eggNOG" id="KOG4759">
    <property type="taxonomic scope" value="Eukaryota"/>
</dbReference>
<dbReference type="HOGENOM" id="CLU_073981_3_0_1"/>
<dbReference type="InParanoid" id="A3BLC3"/>
<dbReference type="OMA" id="FNPMNNG"/>
<dbReference type="OrthoDB" id="407355at2759"/>
<dbReference type="Proteomes" id="UP000000763">
    <property type="component" value="Chromosome 7"/>
</dbReference>
<dbReference type="Proteomes" id="UP000007752">
    <property type="component" value="Chromosome 7"/>
</dbReference>
<dbReference type="Proteomes" id="UP000059680">
    <property type="component" value="Chromosome 7"/>
</dbReference>
<dbReference type="GO" id="GO:0009507">
    <property type="term" value="C:chloroplast"/>
    <property type="evidence" value="ECO:0000318"/>
    <property type="project" value="GO_Central"/>
</dbReference>
<dbReference type="GO" id="GO:0043023">
    <property type="term" value="F:ribosomal large subunit binding"/>
    <property type="evidence" value="ECO:0000318"/>
    <property type="project" value="GO_Central"/>
</dbReference>
<dbReference type="GO" id="GO:0032544">
    <property type="term" value="P:plastid translation"/>
    <property type="evidence" value="ECO:0000318"/>
    <property type="project" value="GO_Central"/>
</dbReference>
<dbReference type="CDD" id="cd00520">
    <property type="entry name" value="RRF"/>
    <property type="match status" value="1"/>
</dbReference>
<dbReference type="FunFam" id="3.30.1360.40:FF:000001">
    <property type="entry name" value="Ribosome-recycling factor"/>
    <property type="match status" value="1"/>
</dbReference>
<dbReference type="FunFam" id="1.10.132.20:FF:000017">
    <property type="entry name" value="Ribosome-recycling factor chloroplastic"/>
    <property type="match status" value="1"/>
</dbReference>
<dbReference type="Gene3D" id="3.30.1360.40">
    <property type="match status" value="1"/>
</dbReference>
<dbReference type="Gene3D" id="1.10.132.20">
    <property type="entry name" value="Ribosome-recycling factor"/>
    <property type="match status" value="1"/>
</dbReference>
<dbReference type="HAMAP" id="MF_00040">
    <property type="entry name" value="RRF"/>
    <property type="match status" value="1"/>
</dbReference>
<dbReference type="InterPro" id="IPR002661">
    <property type="entry name" value="Ribosome_recyc_fac"/>
</dbReference>
<dbReference type="InterPro" id="IPR023584">
    <property type="entry name" value="Ribosome_recyc_fac_dom"/>
</dbReference>
<dbReference type="InterPro" id="IPR036191">
    <property type="entry name" value="RRF_sf"/>
</dbReference>
<dbReference type="NCBIfam" id="TIGR00496">
    <property type="entry name" value="frr"/>
    <property type="match status" value="1"/>
</dbReference>
<dbReference type="PANTHER" id="PTHR20982:SF3">
    <property type="entry name" value="MITOCHONDRIAL RIBOSOME RECYCLING FACTOR PSEUDO 1"/>
    <property type="match status" value="1"/>
</dbReference>
<dbReference type="PANTHER" id="PTHR20982">
    <property type="entry name" value="RIBOSOME RECYCLING FACTOR"/>
    <property type="match status" value="1"/>
</dbReference>
<dbReference type="Pfam" id="PF01765">
    <property type="entry name" value="RRF"/>
    <property type="match status" value="1"/>
</dbReference>
<dbReference type="SUPFAM" id="SSF55194">
    <property type="entry name" value="Ribosome recycling factor, RRF"/>
    <property type="match status" value="1"/>
</dbReference>
<reference key="1">
    <citation type="journal article" date="2005" name="Nature">
        <title>The map-based sequence of the rice genome.</title>
        <authorList>
            <consortium name="International rice genome sequencing project (IRGSP)"/>
        </authorList>
    </citation>
    <scope>NUCLEOTIDE SEQUENCE [LARGE SCALE GENOMIC DNA]</scope>
    <source>
        <strain>cv. Nipponbare</strain>
    </source>
</reference>
<reference key="2">
    <citation type="journal article" date="2008" name="Nucleic Acids Res.">
        <title>The rice annotation project database (RAP-DB): 2008 update.</title>
        <authorList>
            <consortium name="The rice annotation project (RAP)"/>
        </authorList>
    </citation>
    <scope>GENOME REANNOTATION</scope>
    <source>
        <strain>cv. Nipponbare</strain>
    </source>
</reference>
<reference key="3">
    <citation type="journal article" date="2013" name="Rice">
        <title>Improvement of the Oryza sativa Nipponbare reference genome using next generation sequence and optical map data.</title>
        <authorList>
            <person name="Kawahara Y."/>
            <person name="de la Bastide M."/>
            <person name="Hamilton J.P."/>
            <person name="Kanamori H."/>
            <person name="McCombie W.R."/>
            <person name="Ouyang S."/>
            <person name="Schwartz D.C."/>
            <person name="Tanaka T."/>
            <person name="Wu J."/>
            <person name="Zhou S."/>
            <person name="Childs K.L."/>
            <person name="Davidson R.M."/>
            <person name="Lin H."/>
            <person name="Quesada-Ocampo L."/>
            <person name="Vaillancourt B."/>
            <person name="Sakai H."/>
            <person name="Lee S.S."/>
            <person name="Kim J."/>
            <person name="Numa H."/>
            <person name="Itoh T."/>
            <person name="Buell C.R."/>
            <person name="Matsumoto T."/>
        </authorList>
    </citation>
    <scope>GENOME REANNOTATION</scope>
    <source>
        <strain>cv. Nipponbare</strain>
    </source>
</reference>
<reference key="4">
    <citation type="journal article" date="2005" name="PLoS Biol.">
        <title>The genomes of Oryza sativa: a history of duplications.</title>
        <authorList>
            <person name="Yu J."/>
            <person name="Wang J."/>
            <person name="Lin W."/>
            <person name="Li S."/>
            <person name="Li H."/>
            <person name="Zhou J."/>
            <person name="Ni P."/>
            <person name="Dong W."/>
            <person name="Hu S."/>
            <person name="Zeng C."/>
            <person name="Zhang J."/>
            <person name="Zhang Y."/>
            <person name="Li R."/>
            <person name="Xu Z."/>
            <person name="Li S."/>
            <person name="Li X."/>
            <person name="Zheng H."/>
            <person name="Cong L."/>
            <person name="Lin L."/>
            <person name="Yin J."/>
            <person name="Geng J."/>
            <person name="Li G."/>
            <person name="Shi J."/>
            <person name="Liu J."/>
            <person name="Lv H."/>
            <person name="Li J."/>
            <person name="Wang J."/>
            <person name="Deng Y."/>
            <person name="Ran L."/>
            <person name="Shi X."/>
            <person name="Wang X."/>
            <person name="Wu Q."/>
            <person name="Li C."/>
            <person name="Ren X."/>
            <person name="Wang J."/>
            <person name="Wang X."/>
            <person name="Li D."/>
            <person name="Liu D."/>
            <person name="Zhang X."/>
            <person name="Ji Z."/>
            <person name="Zhao W."/>
            <person name="Sun Y."/>
            <person name="Zhang Z."/>
            <person name="Bao J."/>
            <person name="Han Y."/>
            <person name="Dong L."/>
            <person name="Ji J."/>
            <person name="Chen P."/>
            <person name="Wu S."/>
            <person name="Liu J."/>
            <person name="Xiao Y."/>
            <person name="Bu D."/>
            <person name="Tan J."/>
            <person name="Yang L."/>
            <person name="Ye C."/>
            <person name="Zhang J."/>
            <person name="Xu J."/>
            <person name="Zhou Y."/>
            <person name="Yu Y."/>
            <person name="Zhang B."/>
            <person name="Zhuang S."/>
            <person name="Wei H."/>
            <person name="Liu B."/>
            <person name="Lei M."/>
            <person name="Yu H."/>
            <person name="Li Y."/>
            <person name="Xu H."/>
            <person name="Wei S."/>
            <person name="He X."/>
            <person name="Fang L."/>
            <person name="Zhang Z."/>
            <person name="Zhang Y."/>
            <person name="Huang X."/>
            <person name="Su Z."/>
            <person name="Tong W."/>
            <person name="Li J."/>
            <person name="Tong Z."/>
            <person name="Li S."/>
            <person name="Ye J."/>
            <person name="Wang L."/>
            <person name="Fang L."/>
            <person name="Lei T."/>
            <person name="Chen C.-S."/>
            <person name="Chen H.-C."/>
            <person name="Xu Z."/>
            <person name="Li H."/>
            <person name="Huang H."/>
            <person name="Zhang F."/>
            <person name="Xu H."/>
            <person name="Li N."/>
            <person name="Zhao C."/>
            <person name="Li S."/>
            <person name="Dong L."/>
            <person name="Huang Y."/>
            <person name="Li L."/>
            <person name="Xi Y."/>
            <person name="Qi Q."/>
            <person name="Li W."/>
            <person name="Zhang B."/>
            <person name="Hu W."/>
            <person name="Zhang Y."/>
            <person name="Tian X."/>
            <person name="Jiao Y."/>
            <person name="Liang X."/>
            <person name="Jin J."/>
            <person name="Gao L."/>
            <person name="Zheng W."/>
            <person name="Hao B."/>
            <person name="Liu S.-M."/>
            <person name="Wang W."/>
            <person name="Yuan L."/>
            <person name="Cao M."/>
            <person name="McDermott J."/>
            <person name="Samudrala R."/>
            <person name="Wang J."/>
            <person name="Wong G.K.-S."/>
            <person name="Yang H."/>
        </authorList>
    </citation>
    <scope>NUCLEOTIDE SEQUENCE [LARGE SCALE GENOMIC DNA]</scope>
    <source>
        <strain>cv. Nipponbare</strain>
    </source>
</reference>
<reference key="5">
    <citation type="journal article" date="2003" name="Science">
        <title>Collection, mapping, and annotation of over 28,000 cDNA clones from japonica rice.</title>
        <authorList>
            <consortium name="The rice full-length cDNA consortium"/>
        </authorList>
    </citation>
    <scope>NUCLEOTIDE SEQUENCE [LARGE SCALE MRNA] (ISOFORM 1)</scope>
    <source>
        <strain>cv. Nipponbare</strain>
    </source>
</reference>
<accession>A3BLC3</accession>
<accession>B9FY06</accession>
<accession>P83648</accession>
<accession>Q6YTV7</accession>
<sequence length="266" mass="29652">MPPLHAVSPAAAAAPPRALSSAARVPQRPGCVPERPNILSSSTNFMSLRAGPMRFYSRPLILQNSDKRAVLRHATIEEIEAEKSVIEDQARERMEKAIETVQNNFNTVRTGRANPAMLDRIEVEYYGTPVNLKSIAQINTPDATSLLIQPYDKSSLKLIEKTIVAANLGVTPSNDGEVIRVTVPPLTSDRRKELAKTVAKLAEEGKVAIRNIRRDAIKAYDKLEKEKKLSEDNVKDLSADLQKVTDEYMKKIEAIQKQKEQELMKI</sequence>
<organism>
    <name type="scientific">Oryza sativa subsp. japonica</name>
    <name type="common">Rice</name>
    <dbReference type="NCBI Taxonomy" id="39947"/>
    <lineage>
        <taxon>Eukaryota</taxon>
        <taxon>Viridiplantae</taxon>
        <taxon>Streptophyta</taxon>
        <taxon>Embryophyta</taxon>
        <taxon>Tracheophyta</taxon>
        <taxon>Spermatophyta</taxon>
        <taxon>Magnoliopsida</taxon>
        <taxon>Liliopsida</taxon>
        <taxon>Poales</taxon>
        <taxon>Poaceae</taxon>
        <taxon>BOP clade</taxon>
        <taxon>Oryzoideae</taxon>
        <taxon>Oryzeae</taxon>
        <taxon>Oryzinae</taxon>
        <taxon>Oryza</taxon>
        <taxon>Oryza sativa</taxon>
    </lineage>
</organism>
<comment type="function">
    <text evidence="1">Responsible for the release of ribosomes from messenger RNA at the termination of chloroplastic protein biosynthesis.</text>
</comment>
<comment type="subcellular location">
    <subcellularLocation>
        <location>Plastid</location>
        <location>Chloroplast</location>
    </subcellularLocation>
</comment>
<comment type="alternative products">
    <event type="alternative splicing"/>
    <isoform>
        <id>A3BLC3-1</id>
        <id>P83648-1</id>
        <name>1</name>
        <sequence type="displayed"/>
    </isoform>
    <isoform>
        <id>A3BLC3-2</id>
        <id>P83648-2</id>
        <name>2</name>
        <sequence type="described" ref="VSP_024225 VSP_024226"/>
    </isoform>
</comment>
<comment type="similarity">
    <text evidence="4">Belongs to the RRF family.</text>
</comment>
<comment type="sequence caution" evidence="4">
    <conflict type="frameshift">
        <sequence resource="EMBL" id="AK065242"/>
    </conflict>
</comment>
<proteinExistence type="evidence at transcript level"/>